<organism>
    <name type="scientific">Macaca fascicularis</name>
    <name type="common">Crab-eating macaque</name>
    <name type="synonym">Cynomolgus monkey</name>
    <dbReference type="NCBI Taxonomy" id="9541"/>
    <lineage>
        <taxon>Eukaryota</taxon>
        <taxon>Metazoa</taxon>
        <taxon>Chordata</taxon>
        <taxon>Craniata</taxon>
        <taxon>Vertebrata</taxon>
        <taxon>Euteleostomi</taxon>
        <taxon>Mammalia</taxon>
        <taxon>Eutheria</taxon>
        <taxon>Euarchontoglires</taxon>
        <taxon>Primates</taxon>
        <taxon>Haplorrhini</taxon>
        <taxon>Catarrhini</taxon>
        <taxon>Cercopithecidae</taxon>
        <taxon>Cercopithecinae</taxon>
        <taxon>Macaca</taxon>
    </lineage>
</organism>
<name>ATE1_MACFA</name>
<reference key="1">
    <citation type="submission" date="2005-07" db="EMBL/GenBank/DDBJ databases">
        <title>Analysis of gene expression in cynomolgus monkey tissues by macaque cDNA oligo-chips.</title>
        <authorList>
            <person name="Kobayashi M."/>
            <person name="Tanuma R."/>
            <person name="Hirata M."/>
            <person name="Osada N."/>
            <person name="Kusuda J."/>
            <person name="Sugano S."/>
            <person name="Hashimoto K."/>
        </authorList>
    </citation>
    <scope>NUCLEOTIDE SEQUENCE [LARGE SCALE MRNA]</scope>
    <source>
        <tissue>Frontal cortex</tissue>
    </source>
</reference>
<evidence type="ECO:0000250" key="1">
    <source>
        <dbReference type="UniProtKB" id="O95260"/>
    </source>
</evidence>
<evidence type="ECO:0000250" key="2">
    <source>
        <dbReference type="UniProtKB" id="Q9Z2A5"/>
    </source>
</evidence>
<evidence type="ECO:0000256" key="3">
    <source>
        <dbReference type="SAM" id="MobiDB-lite"/>
    </source>
</evidence>
<evidence type="ECO:0000305" key="4"/>
<dbReference type="EC" id="2.3.2.8" evidence="2"/>
<dbReference type="EMBL" id="AB220467">
    <property type="protein sequence ID" value="BAE73000.1"/>
    <property type="molecule type" value="mRNA"/>
</dbReference>
<dbReference type="RefSeq" id="NP_001306295.1">
    <property type="nucleotide sequence ID" value="NM_001319366.1"/>
</dbReference>
<dbReference type="SMR" id="Q2PFX0"/>
<dbReference type="STRING" id="9541.ENSMFAP00000024510"/>
<dbReference type="Proteomes" id="UP000233100">
    <property type="component" value="Unplaced"/>
</dbReference>
<dbReference type="GO" id="GO:0005737">
    <property type="term" value="C:cytoplasm"/>
    <property type="evidence" value="ECO:0007669"/>
    <property type="project" value="UniProtKB-SubCell"/>
</dbReference>
<dbReference type="GO" id="GO:0005634">
    <property type="term" value="C:nucleus"/>
    <property type="evidence" value="ECO:0007669"/>
    <property type="project" value="UniProtKB-SubCell"/>
</dbReference>
<dbReference type="GO" id="GO:0004057">
    <property type="term" value="F:arginyl-tRNA--protein transferase activity"/>
    <property type="evidence" value="ECO:0007669"/>
    <property type="project" value="UniProtKB-EC"/>
</dbReference>
<dbReference type="InterPro" id="IPR016181">
    <property type="entry name" value="Acyl_CoA_acyltransferase"/>
</dbReference>
<dbReference type="InterPro" id="IPR017137">
    <property type="entry name" value="Arg-tRNA-P_Trfase_1_euk"/>
</dbReference>
<dbReference type="InterPro" id="IPR030700">
    <property type="entry name" value="N-end_Aminoacyl_Trfase"/>
</dbReference>
<dbReference type="InterPro" id="IPR007472">
    <property type="entry name" value="N-end_Aminoacyl_Trfase_C"/>
</dbReference>
<dbReference type="InterPro" id="IPR007471">
    <property type="entry name" value="N-end_Aminoacyl_Trfase_N"/>
</dbReference>
<dbReference type="PANTHER" id="PTHR21367">
    <property type="entry name" value="ARGININE-TRNA-PROTEIN TRANSFERASE 1"/>
    <property type="match status" value="1"/>
</dbReference>
<dbReference type="PANTHER" id="PTHR21367:SF1">
    <property type="entry name" value="ARGINYL-TRNA--PROTEIN TRANSFERASE 1"/>
    <property type="match status" value="1"/>
</dbReference>
<dbReference type="Pfam" id="PF04377">
    <property type="entry name" value="ATE_C"/>
    <property type="match status" value="1"/>
</dbReference>
<dbReference type="Pfam" id="PF04376">
    <property type="entry name" value="ATE_N"/>
    <property type="match status" value="1"/>
</dbReference>
<dbReference type="PIRSF" id="PIRSF037207">
    <property type="entry name" value="ATE1_euk"/>
    <property type="match status" value="1"/>
</dbReference>
<dbReference type="SUPFAM" id="SSF55729">
    <property type="entry name" value="Acyl-CoA N-acyltransferases (Nat)"/>
    <property type="match status" value="1"/>
</dbReference>
<feature type="chain" id="PRO_0000351081" description="Arginyl-tRNA--protein transferase 1">
    <location>
        <begin position="1"/>
        <end position="518"/>
    </location>
</feature>
<feature type="region of interest" description="Disordered" evidence="3">
    <location>
        <begin position="149"/>
        <end position="207"/>
    </location>
</feature>
<feature type="compositionally biased region" description="Basic and acidic residues" evidence="3">
    <location>
        <begin position="149"/>
        <end position="165"/>
    </location>
</feature>
<feature type="modified residue" description="Phosphoserine" evidence="1">
    <location>
        <position position="169"/>
    </location>
</feature>
<protein>
    <recommendedName>
        <fullName>Arginyl-tRNA--protein transferase 1</fullName>
        <shortName>Arginyltransferase 1</shortName>
        <shortName>R-transferase 1</shortName>
        <ecNumber evidence="2">2.3.2.8</ecNumber>
    </recommendedName>
    <alternativeName>
        <fullName>Arginine-tRNA--protein transferase 1</fullName>
    </alternativeName>
</protein>
<comment type="function">
    <text evidence="2">Involved in the post-translational conjugation of arginine to the N-terminal aspartate or glutamate of a protein. This arginylation is required for degradation of the protein via the ubiquitin pathway. Does not arginylate cysteine residues.</text>
</comment>
<comment type="catalytic activity">
    <reaction evidence="2">
        <text>an N-terminal L-alpha-aminoacyl-[protein] + L-arginyl-tRNA(Arg) = an N-terminal L-arginyl-L-aminoacyl-[protein] + tRNA(Arg) + H(+)</text>
        <dbReference type="Rhea" id="RHEA:10208"/>
        <dbReference type="Rhea" id="RHEA-COMP:9658"/>
        <dbReference type="Rhea" id="RHEA-COMP:9673"/>
        <dbReference type="Rhea" id="RHEA-COMP:10636"/>
        <dbReference type="Rhea" id="RHEA-COMP:10638"/>
        <dbReference type="ChEBI" id="CHEBI:15378"/>
        <dbReference type="ChEBI" id="CHEBI:78442"/>
        <dbReference type="ChEBI" id="CHEBI:78513"/>
        <dbReference type="ChEBI" id="CHEBI:78597"/>
        <dbReference type="ChEBI" id="CHEBI:83562"/>
        <dbReference type="EC" id="2.3.2.8"/>
    </reaction>
    <physiologicalReaction direction="left-to-right" evidence="2">
        <dbReference type="Rhea" id="RHEA:10209"/>
    </physiologicalReaction>
</comment>
<comment type="subunit">
    <text evidence="2">Monomer. Interacts with LIAT1; LIAT1 is not a substrate of ATE1, the interaction takes place in the cytoplasm and seems to increase ATE1 arginyltransferase activity.</text>
</comment>
<comment type="subcellular location">
    <subcellularLocation>
        <location evidence="2">Nucleus</location>
    </subcellularLocation>
    <subcellularLocation>
        <location evidence="2">Cytoplasm</location>
    </subcellularLocation>
</comment>
<comment type="similarity">
    <text evidence="4">Belongs to the R-transferase family.</text>
</comment>
<sequence>MAFWAGGSPSVVDYFPSEDFYRCGYCKNESGSRSNGMWAHSMTVQDYQDLIDRGWRRSGKYVYKPVMNQTCCPQYTIRCRPLQFQPSKSHKKVLKKMLKFLAKGEVPKGSCEDEPMDSTMDDAVAGDFALINKLDIQCDLKTLSDDVKESLQSEGKNSKKEEPHELLQSQDSVGEKLGSGEPSHSVKVHTVPKPGKGADLSKPPCRKAKEIRKERKRLKLMQQNPAGELEGFQAQGHPPSLFPPKAKSNQPKSLEDLIFESLPENASHKLEVRLVPASFEDPEFKSSFSQSFSLYVKYQVAIHQDLPDECGKTEFTRFLCSSPLEAETPPNGPDCGYGSFHQQYWLDGKIIAVGVIDILPNYVSSVYLYYDPDYSFLSLGVYSALREIAFTRQLHEKTSQLSYYYMGFYIHSCPKMKYKGQYRPSDLLCPETYVWVPIEQCLPSLENSKYCRFNQDPEAVDEDRSTEPDRLQVFHKRAIMPYGVYKKQQKDPSEEAAVLQYASLVGQKCSERMLLFRN</sequence>
<keyword id="KW-0012">Acyltransferase</keyword>
<keyword id="KW-0963">Cytoplasm</keyword>
<keyword id="KW-0539">Nucleus</keyword>
<keyword id="KW-0597">Phosphoprotein</keyword>
<keyword id="KW-1185">Reference proteome</keyword>
<keyword id="KW-0808">Transferase</keyword>
<keyword id="KW-0833">Ubl conjugation pathway</keyword>
<gene>
    <name type="primary">ATE1</name>
    <name type="ORF">QflA-16011</name>
</gene>
<proteinExistence type="evidence at transcript level"/>
<accession>Q2PFX0</accession>